<accession>Q7NM41</accession>
<evidence type="ECO:0000255" key="1">
    <source>
        <dbReference type="HAMAP-Rule" id="MF_01370"/>
    </source>
</evidence>
<dbReference type="EMBL" id="BA000045">
    <property type="protein sequence ID" value="BAC88869.1"/>
    <property type="molecule type" value="Genomic_DNA"/>
</dbReference>
<dbReference type="RefSeq" id="NP_923874.1">
    <property type="nucleotide sequence ID" value="NC_005125.1"/>
</dbReference>
<dbReference type="SMR" id="Q7NM41"/>
<dbReference type="STRING" id="251221.gene:10758406"/>
<dbReference type="EnsemblBacteria" id="BAC88869">
    <property type="protein sequence ID" value="BAC88869"/>
    <property type="gene ID" value="BAC88869"/>
</dbReference>
<dbReference type="KEGG" id="gvi:gsl0928"/>
<dbReference type="HOGENOM" id="CLU_137323_1_0_3"/>
<dbReference type="InParanoid" id="Q7NM41"/>
<dbReference type="OrthoDB" id="559598at2"/>
<dbReference type="PhylomeDB" id="Q7NM41"/>
<dbReference type="Proteomes" id="UP000000557">
    <property type="component" value="Chromosome"/>
</dbReference>
<dbReference type="GO" id="GO:0009654">
    <property type="term" value="C:photosystem II oxygen evolving complex"/>
    <property type="evidence" value="ECO:0007669"/>
    <property type="project" value="InterPro"/>
</dbReference>
<dbReference type="GO" id="GO:0005886">
    <property type="term" value="C:plasma membrane"/>
    <property type="evidence" value="ECO:0007669"/>
    <property type="project" value="UniProtKB-SubCell"/>
</dbReference>
<dbReference type="GO" id="GO:0015979">
    <property type="term" value="P:photosynthesis"/>
    <property type="evidence" value="ECO:0007669"/>
    <property type="project" value="UniProtKB-UniRule"/>
</dbReference>
<dbReference type="Gene3D" id="2.40.30.220">
    <property type="entry name" value="Photosystem II Psb28"/>
    <property type="match status" value="1"/>
</dbReference>
<dbReference type="HAMAP" id="MF_01370">
    <property type="entry name" value="PSII_Psb28"/>
    <property type="match status" value="1"/>
</dbReference>
<dbReference type="InterPro" id="IPR038676">
    <property type="entry name" value="Psb28_c1_sf"/>
</dbReference>
<dbReference type="InterPro" id="IPR005610">
    <property type="entry name" value="PSII_Psb28_class-1"/>
</dbReference>
<dbReference type="NCBIfam" id="TIGR03047">
    <property type="entry name" value="PS_II_psb28"/>
    <property type="match status" value="1"/>
</dbReference>
<dbReference type="PANTHER" id="PTHR34963">
    <property type="match status" value="1"/>
</dbReference>
<dbReference type="PANTHER" id="PTHR34963:SF2">
    <property type="entry name" value="PHOTOSYSTEM II REACTION CENTER PSB28 PROTEIN, CHLOROPLASTIC"/>
    <property type="match status" value="1"/>
</dbReference>
<dbReference type="Pfam" id="PF03912">
    <property type="entry name" value="Psb28"/>
    <property type="match status" value="1"/>
</dbReference>
<organism>
    <name type="scientific">Gloeobacter violaceus (strain ATCC 29082 / PCC 7421)</name>
    <dbReference type="NCBI Taxonomy" id="251221"/>
    <lineage>
        <taxon>Bacteria</taxon>
        <taxon>Bacillati</taxon>
        <taxon>Cyanobacteriota</taxon>
        <taxon>Cyanophyceae</taxon>
        <taxon>Gloeobacterales</taxon>
        <taxon>Gloeobacteraceae</taxon>
        <taxon>Gloeobacter</taxon>
    </lineage>
</organism>
<gene>
    <name evidence="1" type="primary">psb28</name>
    <name type="ordered locus">gsl0928</name>
</gene>
<sequence>MAVAQFLEGINEEITDIRVMASKYDTSRKTALIYIAAPKADLNQVMSFRMRDEEGEITVRDIRSKHLNGKFIGLEISHEMGSDAAWNRFYRFMERMGYA</sequence>
<name>PSB28_GLOVI</name>
<reference key="1">
    <citation type="journal article" date="2003" name="DNA Res.">
        <title>Complete genome structure of Gloeobacter violaceus PCC 7421, a cyanobacterium that lacks thylakoids.</title>
        <authorList>
            <person name="Nakamura Y."/>
            <person name="Kaneko T."/>
            <person name="Sato S."/>
            <person name="Mimuro M."/>
            <person name="Miyashita H."/>
            <person name="Tsuchiya T."/>
            <person name="Sasamoto S."/>
            <person name="Watanabe A."/>
            <person name="Kawashima K."/>
            <person name="Kishida Y."/>
            <person name="Kiyokawa C."/>
            <person name="Kohara M."/>
            <person name="Matsumoto M."/>
            <person name="Matsuno A."/>
            <person name="Nakazaki N."/>
            <person name="Shimpo S."/>
            <person name="Takeuchi C."/>
            <person name="Yamada M."/>
            <person name="Tabata S."/>
        </authorList>
    </citation>
    <scope>NUCLEOTIDE SEQUENCE [LARGE SCALE GENOMIC DNA]</scope>
    <source>
        <strain>ATCC 29082 / PCC 7421</strain>
    </source>
</reference>
<feature type="chain" id="PRO_0000271561" description="Photosystem II reaction center Psb28 protein">
    <location>
        <begin position="1"/>
        <end position="99"/>
    </location>
</feature>
<keyword id="KW-0997">Cell inner membrane</keyword>
<keyword id="KW-1003">Cell membrane</keyword>
<keyword id="KW-0472">Membrane</keyword>
<keyword id="KW-0602">Photosynthesis</keyword>
<keyword id="KW-0604">Photosystem II</keyword>
<keyword id="KW-1185">Reference proteome</keyword>
<proteinExistence type="inferred from homology"/>
<comment type="subunit">
    <text evidence="1">Part of the photosystem II complex.</text>
</comment>
<comment type="subcellular location">
    <subcellularLocation>
        <location evidence="1">Cell inner membrane</location>
        <topology evidence="1">Peripheral membrane protein</topology>
        <orientation evidence="1">Cytoplasmic side</orientation>
    </subcellularLocation>
</comment>
<comment type="similarity">
    <text evidence="1">Belongs to the Psb28 family.</text>
</comment>
<protein>
    <recommendedName>
        <fullName evidence="1">Photosystem II reaction center Psb28 protein</fullName>
    </recommendedName>
    <alternativeName>
        <fullName evidence="1">Photosystem II 13 kDa protein</fullName>
    </alternativeName>
    <alternativeName>
        <fullName evidence="1">Photosystem II reaction center W protein</fullName>
    </alternativeName>
</protein>